<evidence type="ECO:0000250" key="1">
    <source>
        <dbReference type="UniProtKB" id="Q8N2W9"/>
    </source>
</evidence>
<evidence type="ECO:0000255" key="2">
    <source>
        <dbReference type="PROSITE-ProRule" id="PRU00186"/>
    </source>
</evidence>
<evidence type="ECO:0000255" key="3">
    <source>
        <dbReference type="PROSITE-ProRule" id="PRU00452"/>
    </source>
</evidence>
<evidence type="ECO:0000255" key="4">
    <source>
        <dbReference type="PROSITE-ProRule" id="PRU00799"/>
    </source>
</evidence>
<evidence type="ECO:0000256" key="5">
    <source>
        <dbReference type="SAM" id="MobiDB-lite"/>
    </source>
</evidence>
<evidence type="ECO:0000269" key="6">
    <source>
    </source>
</evidence>
<evidence type="ECO:0000303" key="7">
    <source>
    </source>
</evidence>
<evidence type="ECO:0000305" key="8"/>
<evidence type="ECO:0000312" key="9">
    <source>
        <dbReference type="EMBL" id="AAH70017.1"/>
    </source>
</evidence>
<evidence type="ECO:0000312" key="10">
    <source>
        <dbReference type="EMBL" id="AEF32112.1"/>
    </source>
</evidence>
<evidence type="ECO:0000312" key="11">
    <source>
        <dbReference type="EMBL" id="CBX19728.1"/>
    </source>
</evidence>
<evidence type="ECO:0000312" key="12">
    <source>
        <dbReference type="Proteomes" id="UP000000437"/>
    </source>
</evidence>
<evidence type="ECO:0000312" key="13">
    <source>
        <dbReference type="ZFIN" id="ZDB-GENE-040426-2734"/>
    </source>
</evidence>
<reference evidence="10" key="1">
    <citation type="journal article" date="2012" name="J. Immunol.">
        <title>Characterization of a PIAS4 Homologue from Zebrafish: Insights into Its Conserved Negative Regulatory Mechanism in the TRIF, MAVS, and IFN Signaling Pathways during Vertebrate Evolution.</title>
        <authorList>
            <person name="Xiong R."/>
            <person name="Nie L."/>
            <person name="Xiang L.X."/>
            <person name="Shao J.Z."/>
        </authorList>
    </citation>
    <scope>NUCLEOTIDE SEQUENCE [MRNA]</scope>
    <scope>FUNCTION</scope>
    <scope>SUBCELLULAR LOCATION</scope>
    <scope>TISSUE SPECIFICITY</scope>
    <scope>DEVELOPMENTAL STAGE</scope>
    <scope>INDUCTION</scope>
</reference>
<reference evidence="12" key="2">
    <citation type="journal article" date="2013" name="Nature">
        <title>The zebrafish reference genome sequence and its relationship to the human genome.</title>
        <authorList>
            <person name="Howe K."/>
            <person name="Clark M.D."/>
            <person name="Torroja C.F."/>
            <person name="Torrance J."/>
            <person name="Berthelot C."/>
            <person name="Muffato M."/>
            <person name="Collins J.E."/>
            <person name="Humphray S."/>
            <person name="McLaren K."/>
            <person name="Matthews L."/>
            <person name="McLaren S."/>
            <person name="Sealy I."/>
            <person name="Caccamo M."/>
            <person name="Churcher C."/>
            <person name="Scott C."/>
            <person name="Barrett J.C."/>
            <person name="Koch R."/>
            <person name="Rauch G.J."/>
            <person name="White S."/>
            <person name="Chow W."/>
            <person name="Kilian B."/>
            <person name="Quintais L.T."/>
            <person name="Guerra-Assuncao J.A."/>
            <person name="Zhou Y."/>
            <person name="Gu Y."/>
            <person name="Yen J."/>
            <person name="Vogel J.H."/>
            <person name="Eyre T."/>
            <person name="Redmond S."/>
            <person name="Banerjee R."/>
            <person name="Chi J."/>
            <person name="Fu B."/>
            <person name="Langley E."/>
            <person name="Maguire S.F."/>
            <person name="Laird G.K."/>
            <person name="Lloyd D."/>
            <person name="Kenyon E."/>
            <person name="Donaldson S."/>
            <person name="Sehra H."/>
            <person name="Almeida-King J."/>
            <person name="Loveland J."/>
            <person name="Trevanion S."/>
            <person name="Jones M."/>
            <person name="Quail M."/>
            <person name="Willey D."/>
            <person name="Hunt A."/>
            <person name="Burton J."/>
            <person name="Sims S."/>
            <person name="McLay K."/>
            <person name="Plumb B."/>
            <person name="Davis J."/>
            <person name="Clee C."/>
            <person name="Oliver K."/>
            <person name="Clark R."/>
            <person name="Riddle C."/>
            <person name="Elliot D."/>
            <person name="Threadgold G."/>
            <person name="Harden G."/>
            <person name="Ware D."/>
            <person name="Begum S."/>
            <person name="Mortimore B."/>
            <person name="Kerry G."/>
            <person name="Heath P."/>
            <person name="Phillimore B."/>
            <person name="Tracey A."/>
            <person name="Corby N."/>
            <person name="Dunn M."/>
            <person name="Johnson C."/>
            <person name="Wood J."/>
            <person name="Clark S."/>
            <person name="Pelan S."/>
            <person name="Griffiths G."/>
            <person name="Smith M."/>
            <person name="Glithero R."/>
            <person name="Howden P."/>
            <person name="Barker N."/>
            <person name="Lloyd C."/>
            <person name="Stevens C."/>
            <person name="Harley J."/>
            <person name="Holt K."/>
            <person name="Panagiotidis G."/>
            <person name="Lovell J."/>
            <person name="Beasley H."/>
            <person name="Henderson C."/>
            <person name="Gordon D."/>
            <person name="Auger K."/>
            <person name="Wright D."/>
            <person name="Collins J."/>
            <person name="Raisen C."/>
            <person name="Dyer L."/>
            <person name="Leung K."/>
            <person name="Robertson L."/>
            <person name="Ambridge K."/>
            <person name="Leongamornlert D."/>
            <person name="McGuire S."/>
            <person name="Gilderthorp R."/>
            <person name="Griffiths C."/>
            <person name="Manthravadi D."/>
            <person name="Nichol S."/>
            <person name="Barker G."/>
            <person name="Whitehead S."/>
            <person name="Kay M."/>
            <person name="Brown J."/>
            <person name="Murnane C."/>
            <person name="Gray E."/>
            <person name="Humphries M."/>
            <person name="Sycamore N."/>
            <person name="Barker D."/>
            <person name="Saunders D."/>
            <person name="Wallis J."/>
            <person name="Babbage A."/>
            <person name="Hammond S."/>
            <person name="Mashreghi-Mohammadi M."/>
            <person name="Barr L."/>
            <person name="Martin S."/>
            <person name="Wray P."/>
            <person name="Ellington A."/>
            <person name="Matthews N."/>
            <person name="Ellwood M."/>
            <person name="Woodmansey R."/>
            <person name="Clark G."/>
            <person name="Cooper J."/>
            <person name="Tromans A."/>
            <person name="Grafham D."/>
            <person name="Skuce C."/>
            <person name="Pandian R."/>
            <person name="Andrews R."/>
            <person name="Harrison E."/>
            <person name="Kimberley A."/>
            <person name="Garnett J."/>
            <person name="Fosker N."/>
            <person name="Hall R."/>
            <person name="Garner P."/>
            <person name="Kelly D."/>
            <person name="Bird C."/>
            <person name="Palmer S."/>
            <person name="Gehring I."/>
            <person name="Berger A."/>
            <person name="Dooley C.M."/>
            <person name="Ersan-Urun Z."/>
            <person name="Eser C."/>
            <person name="Geiger H."/>
            <person name="Geisler M."/>
            <person name="Karotki L."/>
            <person name="Kirn A."/>
            <person name="Konantz J."/>
            <person name="Konantz M."/>
            <person name="Oberlander M."/>
            <person name="Rudolph-Geiger S."/>
            <person name="Teucke M."/>
            <person name="Lanz C."/>
            <person name="Raddatz G."/>
            <person name="Osoegawa K."/>
            <person name="Zhu B."/>
            <person name="Rapp A."/>
            <person name="Widaa S."/>
            <person name="Langford C."/>
            <person name="Yang F."/>
            <person name="Schuster S.C."/>
            <person name="Carter N.P."/>
            <person name="Harrow J."/>
            <person name="Ning Z."/>
            <person name="Herrero J."/>
            <person name="Searle S.M."/>
            <person name="Enright A."/>
            <person name="Geisler R."/>
            <person name="Plasterk R.H."/>
            <person name="Lee C."/>
            <person name="Westerfield M."/>
            <person name="de Jong P.J."/>
            <person name="Zon L.I."/>
            <person name="Postlethwait J.H."/>
            <person name="Nusslein-Volhard C."/>
            <person name="Hubbard T.J."/>
            <person name="Roest Crollius H."/>
            <person name="Rogers J."/>
            <person name="Stemple D.L."/>
        </authorList>
    </citation>
    <scope>NUCLEOTIDE SEQUENCE [LARGE SCALE GENOMIC DNA]</scope>
    <source>
        <strain evidence="12">Tuebingen</strain>
    </source>
</reference>
<reference evidence="9" key="3">
    <citation type="submission" date="2004-05" db="EMBL/GenBank/DDBJ databases">
        <authorList>
            <consortium name="NIH - Zebrafish Gene Collection (ZGC) project"/>
        </authorList>
    </citation>
    <scope>NUCLEOTIDE SEQUENCE [LARGE SCALE MRNA]</scope>
    <source>
        <tissue evidence="9">Embryo</tissue>
    </source>
</reference>
<reference evidence="11" key="4">
    <citation type="journal article" date="2012" name="PLoS ONE">
        <title>Evolution of JAK-STAT pathway components: mechanisms and role in immune system development.</title>
        <authorList>
            <person name="Liongue C."/>
            <person name="O'Sullivan L.A."/>
            <person name="Ward A.C."/>
        </authorList>
    </citation>
    <scope>IDENTIFICATION</scope>
</reference>
<keyword id="KW-0238">DNA-binding</keyword>
<keyword id="KW-1017">Isopeptide bond</keyword>
<keyword id="KW-0479">Metal-binding</keyword>
<keyword id="KW-0539">Nucleus</keyword>
<keyword id="KW-1185">Reference proteome</keyword>
<keyword id="KW-0804">Transcription</keyword>
<keyword id="KW-0805">Transcription regulation</keyword>
<keyword id="KW-0808">Transferase</keyword>
<keyword id="KW-0832">Ubl conjugation</keyword>
<keyword id="KW-0833">Ubl conjugation pathway</keyword>
<keyword id="KW-0862">Zinc</keyword>
<keyword id="KW-0863">Zinc-finger</keyword>
<feature type="chain" id="PRO_0000446085" description="E3 SUMO-protein ligase PIAS4-A">
    <location>
        <begin position="1"/>
        <end position="505"/>
    </location>
</feature>
<feature type="domain" description="SAP" evidence="2">
    <location>
        <begin position="12"/>
        <end position="46"/>
    </location>
</feature>
<feature type="domain" description="PINIT" evidence="4">
    <location>
        <begin position="104"/>
        <end position="264"/>
    </location>
</feature>
<feature type="zinc finger region" description="SP-RING-type" evidence="3">
    <location>
        <begin position="296"/>
        <end position="381"/>
    </location>
</feature>
<feature type="region of interest" description="Required for nuclear localization" evidence="6">
    <location>
        <begin position="374"/>
        <end position="505"/>
    </location>
</feature>
<feature type="region of interest" description="Disordered" evidence="5">
    <location>
        <begin position="395"/>
        <end position="505"/>
    </location>
</feature>
<feature type="short sequence motif" description="LXXLL motif" evidence="1">
    <location>
        <begin position="20"/>
        <end position="24"/>
    </location>
</feature>
<feature type="compositionally biased region" description="Basic and acidic residues" evidence="5">
    <location>
        <begin position="395"/>
        <end position="407"/>
    </location>
</feature>
<feature type="compositionally biased region" description="Gly residues" evidence="5">
    <location>
        <begin position="437"/>
        <end position="457"/>
    </location>
</feature>
<feature type="compositionally biased region" description="Acidic residues" evidence="5">
    <location>
        <begin position="462"/>
        <end position="485"/>
    </location>
</feature>
<feature type="compositionally biased region" description="Basic and acidic residues" evidence="5">
    <location>
        <begin position="493"/>
        <end position="505"/>
    </location>
</feature>
<feature type="binding site" evidence="3">
    <location>
        <position position="327"/>
    </location>
    <ligand>
        <name>Zn(2+)</name>
        <dbReference type="ChEBI" id="CHEBI:29105"/>
    </ligand>
</feature>
<feature type="binding site" evidence="3">
    <location>
        <position position="329"/>
    </location>
    <ligand>
        <name>Zn(2+)</name>
        <dbReference type="ChEBI" id="CHEBI:29105"/>
    </ligand>
</feature>
<feature type="binding site" evidence="3">
    <location>
        <position position="350"/>
    </location>
    <ligand>
        <name>Zn(2+)</name>
        <dbReference type="ChEBI" id="CHEBI:29105"/>
    </ligand>
</feature>
<feature type="binding site" evidence="3">
    <location>
        <position position="353"/>
    </location>
    <ligand>
        <name>Zn(2+)</name>
        <dbReference type="ChEBI" id="CHEBI:29105"/>
    </ligand>
</feature>
<feature type="cross-link" description="Glycyl lysine isopeptide (Lys-Gly) (interchain with G-Cter in SUMO); alternate" evidence="1">
    <location>
        <position position="35"/>
    </location>
</feature>
<feature type="cross-link" description="Glycyl lysine isopeptide (Lys-Gly) (interchain with G-Cter in SUMO2); alternate" evidence="1">
    <location>
        <position position="35"/>
    </location>
</feature>
<feature type="cross-link" description="Glycyl lysine isopeptide (Lys-Gly) (interchain with G-Cter in SUMO2)" evidence="1">
    <location>
        <position position="56"/>
    </location>
</feature>
<feature type="cross-link" description="Glycyl lysine isopeptide (Lys-Gly) (interchain with G-Cter in SUMO2)" evidence="1">
    <location>
        <position position="68"/>
    </location>
</feature>
<feature type="sequence conflict" description="In Ref. 3; AAH57528." evidence="8" ref="3">
    <original>N</original>
    <variation>S</variation>
    <location>
        <position position="126"/>
    </location>
</feature>
<feature type="sequence conflict" description="In Ref. 1; AEF32112." evidence="8" ref="1">
    <original>V</original>
    <variation>I</variation>
    <location>
        <position position="137"/>
    </location>
</feature>
<feature type="sequence conflict" description="In Ref. 3; AAH57528." evidence="8" ref="3">
    <original>D</original>
    <variation>E</variation>
    <location>
        <position position="152"/>
    </location>
</feature>
<sequence>MAAELVEAMNMVKSFRVSDLQTLLASMGRSKSGLKQDLVGRALRLVQTEYSPELLKNVRQLYETRFPKASAWLAARRPETVAVNYPALNSSPRGTGQGTDYLNGIPKPAPPPAAEVKLVPLPFYHNLETLLPPTELVAQNSEKLQESQCVFDLTPNQVDQIRNSSELRPGMKSVQVVLRICYTDSIGVQEDQYPPNIAVKVNQSYCHVPGYYPSNKPGVEPRRPCRPVNITPWLHLSTVTNRVTITWGNFGKRYSVAVYLVRVFTSGELFNQLKHCSVENPDRCRERIQDKLRFDPESEIATTGLRVSLICPLVKMRLGVPCRVLTCAHLQCFDAVFFLQMNEKKPTWTCPVCDKPAPFELLTIDGLLSEILKETPEDVEEIEYLTDGSWRPIRDDKEKERERENSRTPDYPVVDICVPEANGHSPAHSGTNQTGKSGSGGASAGTGSTSGGSGGGTVVDLTLDDSSEEEGGGGAEDSEETDDSQDSPAPKRGRYDYDKDLVTAY</sequence>
<comment type="function">
    <text evidence="1 6">Functions as an E3-type small ubiquitin-like modifier (SUMO) ligase (By similarity). May play a role as a transcriptional coregulator in various cellular pathways (By similarity). Catalyzes conjugation of SUMO2 to KAT5 in response to DNA damage, facilitating repair of DNA double-strand breaks (DSBs) via homologous recombination (HR) (By similarity). Mediates sumoylation of PARP1 in response to PARP1 trapping to chromatin (By similarity). Negatively regulates induction of interferon phi 1 (ifnphi1) mediated by mavs and ticam1/trif. Also inhibits ifnphi1-mediated activation of the interferon-stimulated genes (ISGs) pkz and cd40, and to a lesser extent rsad2 and isg15 (PubMed:22345667). May inhibit ticam1/trif-mediated activation of NF-kappa-B (PubMed:22345667).</text>
</comment>
<comment type="catalytic activity">
    <reaction evidence="1">
        <text>S-ubiquitinyl-[E2 ubiquitin-conjugating enzyme]-L-cysteine + [acceptor protein]-L-lysine = [E2 ubiquitin-conjugating enzyme]-L-cysteine + N(6)-ubiquitinyl-[acceptor protein]-L-lysine.</text>
        <dbReference type="EC" id="2.3.2.27"/>
    </reaction>
</comment>
<comment type="pathway">
    <text evidence="1">Protein modification; protein sumoylation.</text>
</comment>
<comment type="subcellular location">
    <subcellularLocation>
        <location evidence="6">Nucleus</location>
    </subcellularLocation>
</comment>
<comment type="tissue specificity">
    <text evidence="6">Highly expressed in spleen, liver, and brain. Expressed at lower levels in heart, intestine, kidney, gill, skin, and muscle.</text>
</comment>
<comment type="developmental stage">
    <text evidence="6">Highly expressed in early development (6 hours to 24 hours post fertilization), with lower expression thereafter.</text>
</comment>
<comment type="induction">
    <text evidence="6">Up-regulated in response to polyinosinic-polycytidylic acid (poly(I:C)), and interferon phi 1 (ifnphi1).</text>
</comment>
<comment type="domain">
    <text evidence="1">The LXXLL motif is a coregulator signature that is essential for transcriptional corepression.</text>
</comment>
<comment type="PTM">
    <text evidence="1">Sumoylated. Lys-35 is the main site of sumoylation.</text>
</comment>
<comment type="similarity">
    <text evidence="8">Belongs to the PIAS family.</text>
</comment>
<organism evidence="12">
    <name type="scientific">Danio rerio</name>
    <name type="common">Zebrafish</name>
    <name type="synonym">Brachydanio rerio</name>
    <dbReference type="NCBI Taxonomy" id="7955"/>
    <lineage>
        <taxon>Eukaryota</taxon>
        <taxon>Metazoa</taxon>
        <taxon>Chordata</taxon>
        <taxon>Craniata</taxon>
        <taxon>Vertebrata</taxon>
        <taxon>Euteleostomi</taxon>
        <taxon>Actinopterygii</taxon>
        <taxon>Neopterygii</taxon>
        <taxon>Teleostei</taxon>
        <taxon>Ostariophysi</taxon>
        <taxon>Cypriniformes</taxon>
        <taxon>Danionidae</taxon>
        <taxon>Danioninae</taxon>
        <taxon>Danio</taxon>
    </lineage>
</organism>
<gene>
    <name evidence="7 13" type="primary">pias4a</name>
</gene>
<proteinExistence type="evidence at transcript level"/>
<name>PIS4A_DANRE</name>
<accession>F1R4C4</accession>
<accession>H8YLC1</accession>
<accession>Q6IS20</accession>
<accession>Q6PFJ4</accession>
<protein>
    <recommendedName>
        <fullName evidence="8">E3 SUMO-protein ligase PIAS4-A</fullName>
        <ecNumber evidence="1">2.3.2.27</ecNumber>
    </recommendedName>
    <alternativeName>
        <fullName evidence="7">Protein inhibitor of activated STAT protein 4</fullName>
    </alternativeName>
</protein>
<dbReference type="EC" id="2.3.2.27" evidence="1"/>
<dbReference type="EMBL" id="JF759916">
    <property type="protein sequence ID" value="AEF32112.1"/>
    <property type="molecule type" value="mRNA"/>
</dbReference>
<dbReference type="EMBL" id="BX088720">
    <property type="status" value="NOT_ANNOTATED_CDS"/>
    <property type="molecule type" value="Genomic_DNA"/>
</dbReference>
<dbReference type="EMBL" id="BC057528">
    <property type="protein sequence ID" value="AAH57528.1"/>
    <property type="molecule type" value="mRNA"/>
</dbReference>
<dbReference type="EMBL" id="BC070017">
    <property type="protein sequence ID" value="AAH70017.1"/>
    <property type="molecule type" value="mRNA"/>
</dbReference>
<dbReference type="EMBL" id="BN001519">
    <property type="protein sequence ID" value="CBX19728.1"/>
    <property type="molecule type" value="mRNA"/>
</dbReference>
<dbReference type="RefSeq" id="NP_998568.2">
    <property type="nucleotide sequence ID" value="NM_213403.2"/>
</dbReference>
<dbReference type="SMR" id="F1R4C4"/>
<dbReference type="FunCoup" id="F1R4C4">
    <property type="interactions" value="1027"/>
</dbReference>
<dbReference type="STRING" id="7955.ENSDARP00000096293"/>
<dbReference type="PaxDb" id="7955-ENSDARP00000096293"/>
<dbReference type="GeneID" id="406712"/>
<dbReference type="KEGG" id="dre:406712"/>
<dbReference type="AGR" id="ZFIN:ZDB-GENE-040426-2734"/>
<dbReference type="CTD" id="406712"/>
<dbReference type="ZFIN" id="ZDB-GENE-040426-2734">
    <property type="gene designation" value="pias4a"/>
</dbReference>
<dbReference type="eggNOG" id="KOG2169">
    <property type="taxonomic scope" value="Eukaryota"/>
</dbReference>
<dbReference type="HOGENOM" id="CLU_020768_1_1_1"/>
<dbReference type="InParanoid" id="F1R4C4"/>
<dbReference type="OrthoDB" id="10263264at2759"/>
<dbReference type="PhylomeDB" id="F1R4C4"/>
<dbReference type="TreeFam" id="TF323787"/>
<dbReference type="Reactome" id="R-DRE-196791">
    <property type="pathway name" value="Vitamin D (calciferol) metabolism"/>
</dbReference>
<dbReference type="Reactome" id="R-DRE-3108214">
    <property type="pathway name" value="SUMOylation of DNA damage response and repair proteins"/>
</dbReference>
<dbReference type="Reactome" id="R-DRE-3232142">
    <property type="pathway name" value="SUMOylation of ubiquitinylation proteins"/>
</dbReference>
<dbReference type="Reactome" id="R-DRE-4085377">
    <property type="pathway name" value="SUMOylation of SUMOylation proteins"/>
</dbReference>
<dbReference type="Reactome" id="R-DRE-4090294">
    <property type="pathway name" value="SUMOylation of intracellular receptors"/>
</dbReference>
<dbReference type="Reactome" id="R-DRE-4755510">
    <property type="pathway name" value="SUMOylation of immune response proteins"/>
</dbReference>
<dbReference type="UniPathway" id="UPA00886"/>
<dbReference type="PRO" id="PR:F1R4C4"/>
<dbReference type="Proteomes" id="UP000000437">
    <property type="component" value="Chromosome 22"/>
</dbReference>
<dbReference type="GO" id="GO:0000785">
    <property type="term" value="C:chromatin"/>
    <property type="evidence" value="ECO:0000318"/>
    <property type="project" value="GO_Central"/>
</dbReference>
<dbReference type="GO" id="GO:0005634">
    <property type="term" value="C:nucleus"/>
    <property type="evidence" value="ECO:0000314"/>
    <property type="project" value="ZFIN"/>
</dbReference>
<dbReference type="GO" id="GO:0003677">
    <property type="term" value="F:DNA binding"/>
    <property type="evidence" value="ECO:0007669"/>
    <property type="project" value="UniProtKB-KW"/>
</dbReference>
<dbReference type="GO" id="GO:0061665">
    <property type="term" value="F:SUMO ligase activity"/>
    <property type="evidence" value="ECO:0000250"/>
    <property type="project" value="UniProtKB"/>
</dbReference>
<dbReference type="GO" id="GO:0003712">
    <property type="term" value="F:transcription coregulator activity"/>
    <property type="evidence" value="ECO:0000318"/>
    <property type="project" value="GO_Central"/>
</dbReference>
<dbReference type="GO" id="GO:0008270">
    <property type="term" value="F:zinc ion binding"/>
    <property type="evidence" value="ECO:0007669"/>
    <property type="project" value="UniProtKB-KW"/>
</dbReference>
<dbReference type="GO" id="GO:0032480">
    <property type="term" value="P:negative regulation of type I interferon production"/>
    <property type="evidence" value="ECO:0000315"/>
    <property type="project" value="ZFIN"/>
</dbReference>
<dbReference type="GO" id="GO:0060339">
    <property type="term" value="P:negative regulation of type I interferon-mediated signaling pathway"/>
    <property type="evidence" value="ECO:0000315"/>
    <property type="project" value="ZFIN"/>
</dbReference>
<dbReference type="GO" id="GO:1905168">
    <property type="term" value="P:positive regulation of double-strand break repair via homologous recombination"/>
    <property type="evidence" value="ECO:0000250"/>
    <property type="project" value="UniProtKB"/>
</dbReference>
<dbReference type="GO" id="GO:0016925">
    <property type="term" value="P:protein sumoylation"/>
    <property type="evidence" value="ECO:0000318"/>
    <property type="project" value="GO_Central"/>
</dbReference>
<dbReference type="GO" id="GO:0006357">
    <property type="term" value="P:regulation of transcription by RNA polymerase II"/>
    <property type="evidence" value="ECO:0000318"/>
    <property type="project" value="GO_Central"/>
</dbReference>
<dbReference type="CDD" id="cd16821">
    <property type="entry name" value="SP-RING_PIAS4"/>
    <property type="match status" value="1"/>
</dbReference>
<dbReference type="FunFam" id="3.30.40.10:FF:000003">
    <property type="entry name" value="E3 SUMO-protein ligase PIAS2 isoform X1"/>
    <property type="match status" value="1"/>
</dbReference>
<dbReference type="FunFam" id="1.10.720.30:FF:000009">
    <property type="entry name" value="E3 SUMO-protein ligase PIAS4"/>
    <property type="match status" value="1"/>
</dbReference>
<dbReference type="FunFam" id="2.60.120.780:FF:000002">
    <property type="entry name" value="E3 SUMO-protein ligase PIAS4"/>
    <property type="match status" value="1"/>
</dbReference>
<dbReference type="Gene3D" id="2.60.120.780">
    <property type="entry name" value="PINIT domain"/>
    <property type="match status" value="1"/>
</dbReference>
<dbReference type="Gene3D" id="1.10.720.30">
    <property type="entry name" value="SAP domain"/>
    <property type="match status" value="1"/>
</dbReference>
<dbReference type="Gene3D" id="3.30.40.10">
    <property type="entry name" value="Zinc/RING finger domain, C3HC4 (zinc finger)"/>
    <property type="match status" value="1"/>
</dbReference>
<dbReference type="InterPro" id="IPR023321">
    <property type="entry name" value="PINIT"/>
</dbReference>
<dbReference type="InterPro" id="IPR038654">
    <property type="entry name" value="PINIT_sf"/>
</dbReference>
<dbReference type="InterPro" id="IPR003034">
    <property type="entry name" value="SAP_dom"/>
</dbReference>
<dbReference type="InterPro" id="IPR036361">
    <property type="entry name" value="SAP_dom_sf"/>
</dbReference>
<dbReference type="InterPro" id="IPR004181">
    <property type="entry name" value="Znf_MIZ"/>
</dbReference>
<dbReference type="InterPro" id="IPR013083">
    <property type="entry name" value="Znf_RING/FYVE/PHD"/>
</dbReference>
<dbReference type="PANTHER" id="PTHR10782:SF9">
    <property type="entry name" value="E3 SUMO-PROTEIN LIGASE PIAS4"/>
    <property type="match status" value="1"/>
</dbReference>
<dbReference type="PANTHER" id="PTHR10782">
    <property type="entry name" value="ZINC FINGER MIZ DOMAIN-CONTAINING PROTEIN"/>
    <property type="match status" value="1"/>
</dbReference>
<dbReference type="Pfam" id="PF14324">
    <property type="entry name" value="PINIT"/>
    <property type="match status" value="1"/>
</dbReference>
<dbReference type="Pfam" id="PF02037">
    <property type="entry name" value="SAP"/>
    <property type="match status" value="1"/>
</dbReference>
<dbReference type="Pfam" id="PF02891">
    <property type="entry name" value="zf-MIZ"/>
    <property type="match status" value="1"/>
</dbReference>
<dbReference type="SMART" id="SM00513">
    <property type="entry name" value="SAP"/>
    <property type="match status" value="1"/>
</dbReference>
<dbReference type="SUPFAM" id="SSF68906">
    <property type="entry name" value="SAP domain"/>
    <property type="match status" value="1"/>
</dbReference>
<dbReference type="PROSITE" id="PS51466">
    <property type="entry name" value="PINIT"/>
    <property type="match status" value="1"/>
</dbReference>
<dbReference type="PROSITE" id="PS50800">
    <property type="entry name" value="SAP"/>
    <property type="match status" value="1"/>
</dbReference>
<dbReference type="PROSITE" id="PS51044">
    <property type="entry name" value="ZF_SP_RING"/>
    <property type="match status" value="1"/>
</dbReference>